<protein>
    <recommendedName>
        <fullName evidence="1">tRNA U34 carboxymethyltransferase</fullName>
        <ecNumber evidence="1">2.5.1.-</ecNumber>
    </recommendedName>
</protein>
<feature type="chain" id="PRO_0000313901" description="tRNA U34 carboxymethyltransferase">
    <location>
        <begin position="1"/>
        <end position="322"/>
    </location>
</feature>
<feature type="binding site" evidence="1">
    <location>
        <position position="90"/>
    </location>
    <ligand>
        <name>carboxy-S-adenosyl-L-methionine</name>
        <dbReference type="ChEBI" id="CHEBI:134278"/>
    </ligand>
</feature>
<feature type="binding site" evidence="1">
    <location>
        <position position="104"/>
    </location>
    <ligand>
        <name>carboxy-S-adenosyl-L-methionine</name>
        <dbReference type="ChEBI" id="CHEBI:134278"/>
    </ligand>
</feature>
<feature type="binding site" evidence="1">
    <location>
        <position position="109"/>
    </location>
    <ligand>
        <name>carboxy-S-adenosyl-L-methionine</name>
        <dbReference type="ChEBI" id="CHEBI:134278"/>
    </ligand>
</feature>
<feature type="binding site" evidence="1">
    <location>
        <position position="129"/>
    </location>
    <ligand>
        <name>carboxy-S-adenosyl-L-methionine</name>
        <dbReference type="ChEBI" id="CHEBI:134278"/>
    </ligand>
</feature>
<feature type="binding site" evidence="1">
    <location>
        <begin position="151"/>
        <end position="153"/>
    </location>
    <ligand>
        <name>carboxy-S-adenosyl-L-methionine</name>
        <dbReference type="ChEBI" id="CHEBI:134278"/>
    </ligand>
</feature>
<feature type="binding site" evidence="1">
    <location>
        <begin position="179"/>
        <end position="180"/>
    </location>
    <ligand>
        <name>carboxy-S-adenosyl-L-methionine</name>
        <dbReference type="ChEBI" id="CHEBI:134278"/>
    </ligand>
</feature>
<feature type="binding site" evidence="1">
    <location>
        <position position="195"/>
    </location>
    <ligand>
        <name>carboxy-S-adenosyl-L-methionine</name>
        <dbReference type="ChEBI" id="CHEBI:134278"/>
    </ligand>
</feature>
<feature type="binding site" evidence="1">
    <location>
        <position position="199"/>
    </location>
    <ligand>
        <name>carboxy-S-adenosyl-L-methionine</name>
        <dbReference type="ChEBI" id="CHEBI:134278"/>
    </ligand>
</feature>
<feature type="binding site" evidence="1">
    <location>
        <position position="314"/>
    </location>
    <ligand>
        <name>carboxy-S-adenosyl-L-methionine</name>
        <dbReference type="ChEBI" id="CHEBI:134278"/>
    </ligand>
</feature>
<reference key="1">
    <citation type="journal article" date="2006" name="Nat. Biotechnol.">
        <title>Genome sequence of the ubiquitous hydrocarbon-degrading marine bacterium Alcanivorax borkumensis.</title>
        <authorList>
            <person name="Schneiker S."/>
            <person name="Martins dos Santos V.A.P."/>
            <person name="Bartels D."/>
            <person name="Bekel T."/>
            <person name="Brecht M."/>
            <person name="Buhrmester J."/>
            <person name="Chernikova T.N."/>
            <person name="Denaro R."/>
            <person name="Ferrer M."/>
            <person name="Gertler C."/>
            <person name="Goesmann A."/>
            <person name="Golyshina O.V."/>
            <person name="Kaminski F."/>
            <person name="Khachane A.N."/>
            <person name="Lang S."/>
            <person name="Linke B."/>
            <person name="McHardy A.C."/>
            <person name="Meyer F."/>
            <person name="Nechitaylo T."/>
            <person name="Puehler A."/>
            <person name="Regenhardt D."/>
            <person name="Rupp O."/>
            <person name="Sabirova J.S."/>
            <person name="Selbitschka W."/>
            <person name="Yakimov M.M."/>
            <person name="Timmis K.N."/>
            <person name="Vorhoelter F.-J."/>
            <person name="Weidner S."/>
            <person name="Kaiser O."/>
            <person name="Golyshin P.N."/>
        </authorList>
    </citation>
    <scope>NUCLEOTIDE SEQUENCE [LARGE SCALE GENOMIC DNA]</scope>
    <source>
        <strain>ATCC 700651 / DSM 11573 / NCIMB 13689 / SK2</strain>
    </source>
</reference>
<evidence type="ECO:0000255" key="1">
    <source>
        <dbReference type="HAMAP-Rule" id="MF_01590"/>
    </source>
</evidence>
<keyword id="KW-1185">Reference proteome</keyword>
<keyword id="KW-0808">Transferase</keyword>
<keyword id="KW-0819">tRNA processing</keyword>
<dbReference type="EC" id="2.5.1.-" evidence="1"/>
<dbReference type="EMBL" id="AM286690">
    <property type="protein sequence ID" value="CAL16422.1"/>
    <property type="molecule type" value="Genomic_DNA"/>
</dbReference>
<dbReference type="RefSeq" id="WP_011588258.1">
    <property type="nucleotide sequence ID" value="NC_008260.1"/>
</dbReference>
<dbReference type="SMR" id="Q0VQX6"/>
<dbReference type="STRING" id="393595.ABO_0974"/>
<dbReference type="KEGG" id="abo:ABO_0974"/>
<dbReference type="eggNOG" id="COG2227">
    <property type="taxonomic scope" value="Bacteria"/>
</dbReference>
<dbReference type="HOGENOM" id="CLU_052665_0_0_6"/>
<dbReference type="OrthoDB" id="9773188at2"/>
<dbReference type="Proteomes" id="UP000008871">
    <property type="component" value="Chromosome"/>
</dbReference>
<dbReference type="GO" id="GO:0008168">
    <property type="term" value="F:methyltransferase activity"/>
    <property type="evidence" value="ECO:0007669"/>
    <property type="project" value="TreeGrafter"/>
</dbReference>
<dbReference type="GO" id="GO:0016765">
    <property type="term" value="F:transferase activity, transferring alkyl or aryl (other than methyl) groups"/>
    <property type="evidence" value="ECO:0007669"/>
    <property type="project" value="UniProtKB-UniRule"/>
</dbReference>
<dbReference type="GO" id="GO:0002098">
    <property type="term" value="P:tRNA wobble uridine modification"/>
    <property type="evidence" value="ECO:0007669"/>
    <property type="project" value="InterPro"/>
</dbReference>
<dbReference type="CDD" id="cd02440">
    <property type="entry name" value="AdoMet_MTases"/>
    <property type="match status" value="1"/>
</dbReference>
<dbReference type="Gene3D" id="3.40.50.150">
    <property type="entry name" value="Vaccinia Virus protein VP39"/>
    <property type="match status" value="1"/>
</dbReference>
<dbReference type="HAMAP" id="MF_01590">
    <property type="entry name" value="tRNA_carboxymethyltr_CmoB"/>
    <property type="match status" value="1"/>
</dbReference>
<dbReference type="InterPro" id="IPR010017">
    <property type="entry name" value="CmoB"/>
</dbReference>
<dbReference type="InterPro" id="IPR027555">
    <property type="entry name" value="Mo5U34_MeTrfas-like"/>
</dbReference>
<dbReference type="InterPro" id="IPR029063">
    <property type="entry name" value="SAM-dependent_MTases_sf"/>
</dbReference>
<dbReference type="NCBIfam" id="NF011650">
    <property type="entry name" value="PRK15068.1"/>
    <property type="match status" value="1"/>
</dbReference>
<dbReference type="NCBIfam" id="TIGR00452">
    <property type="entry name" value="tRNA 5-methoxyuridine(34)/uridine 5-oxyacetic acid(34) synthase CmoB"/>
    <property type="match status" value="1"/>
</dbReference>
<dbReference type="PANTHER" id="PTHR43464">
    <property type="entry name" value="METHYLTRANSFERASE"/>
    <property type="match status" value="1"/>
</dbReference>
<dbReference type="PANTHER" id="PTHR43464:SF95">
    <property type="entry name" value="TRNA U34 CARBOXYMETHYLTRANSFERASE"/>
    <property type="match status" value="1"/>
</dbReference>
<dbReference type="Pfam" id="PF08003">
    <property type="entry name" value="Methyltransf_9"/>
    <property type="match status" value="1"/>
</dbReference>
<dbReference type="SUPFAM" id="SSF53335">
    <property type="entry name" value="S-adenosyl-L-methionine-dependent methyltransferases"/>
    <property type="match status" value="1"/>
</dbReference>
<proteinExistence type="inferred from homology"/>
<gene>
    <name evidence="1" type="primary">cmoB</name>
    <name type="ordered locus">ABO_0974</name>
</gene>
<name>CMOB_ALCBS</name>
<comment type="function">
    <text evidence="1">Catalyzes carboxymethyl transfer from carboxy-S-adenosyl-L-methionine (Cx-SAM) to 5-hydroxyuridine (ho5U) to form 5-carboxymethoxyuridine (cmo5U) at position 34 in tRNAs.</text>
</comment>
<comment type="catalytic activity">
    <reaction evidence="1">
        <text>carboxy-S-adenosyl-L-methionine + 5-hydroxyuridine(34) in tRNA = 5-carboxymethoxyuridine(34) in tRNA + S-adenosyl-L-homocysteine + H(+)</text>
        <dbReference type="Rhea" id="RHEA:52848"/>
        <dbReference type="Rhea" id="RHEA-COMP:13381"/>
        <dbReference type="Rhea" id="RHEA-COMP:13383"/>
        <dbReference type="ChEBI" id="CHEBI:15378"/>
        <dbReference type="ChEBI" id="CHEBI:57856"/>
        <dbReference type="ChEBI" id="CHEBI:134278"/>
        <dbReference type="ChEBI" id="CHEBI:136877"/>
        <dbReference type="ChEBI" id="CHEBI:136879"/>
    </reaction>
</comment>
<comment type="subunit">
    <text evidence="1">Homotetramer.</text>
</comment>
<comment type="similarity">
    <text evidence="1">Belongs to the class I-like SAM-binding methyltransferase superfamily. CmoB family.</text>
</comment>
<organism>
    <name type="scientific">Alcanivorax borkumensis (strain ATCC 700651 / DSM 11573 / NCIMB 13689 / SK2)</name>
    <dbReference type="NCBI Taxonomy" id="393595"/>
    <lineage>
        <taxon>Bacteria</taxon>
        <taxon>Pseudomonadati</taxon>
        <taxon>Pseudomonadota</taxon>
        <taxon>Gammaproteobacteria</taxon>
        <taxon>Oceanospirillales</taxon>
        <taxon>Alcanivoracaceae</taxon>
        <taxon>Alcanivorax</taxon>
    </lineage>
</organism>
<sequence>MLTDYLQACERGLEPLFSPQILSAVMALSRQRLVERPHGDLPRWMAALDALPAGPTNCALDQNTLTIGRAGEQNEEAVKLALQGLIPWRKGPFEFFGVPVETEWRSDWKWQRVAPHLSSLQGRRILDVGCGSGYHCWRMAAAGASCVVGIDPTILFLVQYLAVRRFAPDLPVWFLPLRMEELPAEGGQFDTVFSMGVLYHRRSPLDHLLELKGALCAGGELVLETLVVEGDECTVLMPQDRYAMMRNVFFLPSVAMLSRWLERCGFVDVRCVDESNTSVQEQRSTDWMRFQSLPDFLDPEDHSLTREGYPAPRRAVLVARKP</sequence>
<accession>Q0VQX6</accession>